<protein>
    <recommendedName>
        <fullName evidence="1">Putative membrane protein insertion efficiency factor</fullName>
    </recommendedName>
</protein>
<accession>B1GZ49</accession>
<gene>
    <name type="ordered locus">TGRD_048</name>
</gene>
<dbReference type="EMBL" id="AP009510">
    <property type="protein sequence ID" value="BAG13531.1"/>
    <property type="molecule type" value="Genomic_DNA"/>
</dbReference>
<dbReference type="RefSeq" id="WP_015423060.1">
    <property type="nucleotide sequence ID" value="NC_020419.1"/>
</dbReference>
<dbReference type="STRING" id="471821.TGRD_048"/>
<dbReference type="KEGG" id="eti:RSTT_042"/>
<dbReference type="KEGG" id="rsd:TGRD_048"/>
<dbReference type="HOGENOM" id="CLU_144811_6_0_0"/>
<dbReference type="OrthoDB" id="9801753at2"/>
<dbReference type="Proteomes" id="UP000001691">
    <property type="component" value="Chromosome"/>
</dbReference>
<dbReference type="GO" id="GO:0005886">
    <property type="term" value="C:plasma membrane"/>
    <property type="evidence" value="ECO:0007669"/>
    <property type="project" value="UniProtKB-SubCell"/>
</dbReference>
<dbReference type="HAMAP" id="MF_00386">
    <property type="entry name" value="UPF0161_YidD"/>
    <property type="match status" value="1"/>
</dbReference>
<dbReference type="InterPro" id="IPR002696">
    <property type="entry name" value="Membr_insert_effic_factor_YidD"/>
</dbReference>
<dbReference type="NCBIfam" id="TIGR00278">
    <property type="entry name" value="membrane protein insertion efficiency factor YidD"/>
    <property type="match status" value="1"/>
</dbReference>
<dbReference type="PANTHER" id="PTHR33383">
    <property type="entry name" value="MEMBRANE PROTEIN INSERTION EFFICIENCY FACTOR-RELATED"/>
    <property type="match status" value="1"/>
</dbReference>
<dbReference type="PANTHER" id="PTHR33383:SF1">
    <property type="entry name" value="MEMBRANE PROTEIN INSERTION EFFICIENCY FACTOR-RELATED"/>
    <property type="match status" value="1"/>
</dbReference>
<dbReference type="Pfam" id="PF01809">
    <property type="entry name" value="YidD"/>
    <property type="match status" value="1"/>
</dbReference>
<dbReference type="SMART" id="SM01234">
    <property type="entry name" value="Haemolytic"/>
    <property type="match status" value="1"/>
</dbReference>
<organism>
    <name type="scientific">Endomicrobium trichonymphae</name>
    <dbReference type="NCBI Taxonomy" id="1408204"/>
    <lineage>
        <taxon>Bacteria</taxon>
        <taxon>Pseudomonadati</taxon>
        <taxon>Elusimicrobiota</taxon>
        <taxon>Endomicrobiia</taxon>
        <taxon>Endomicrobiales</taxon>
        <taxon>Endomicrobiaceae</taxon>
        <taxon>Candidatus Endomicrobiellum</taxon>
    </lineage>
</organism>
<comment type="function">
    <text evidence="1">Could be involved in insertion of integral membrane proteins into the membrane.</text>
</comment>
<comment type="subcellular location">
    <subcellularLocation>
        <location evidence="1">Cell inner membrane</location>
        <topology evidence="1">Peripheral membrane protein</topology>
        <orientation evidence="1">Cytoplasmic side</orientation>
    </subcellularLocation>
</comment>
<comment type="similarity">
    <text evidence="1">Belongs to the UPF0161 family.</text>
</comment>
<proteinExistence type="inferred from homology"/>
<reference key="1">
    <citation type="journal article" date="2008" name="Proc. Natl. Acad. Sci. U.S.A.">
        <title>Complete genome of the uncultured termite group 1 bacteria in a single host protist cell.</title>
        <authorList>
            <person name="Hongoh Y."/>
            <person name="Sharma V.K."/>
            <person name="Prakash T."/>
            <person name="Noda S."/>
            <person name="Taylor T.D."/>
            <person name="Kudo T."/>
            <person name="Sakaki Y."/>
            <person name="Toyoda A."/>
            <person name="Hattori M."/>
            <person name="Ohkuma M."/>
        </authorList>
    </citation>
    <scope>NUCLEOTIDE SEQUENCE [LARGE SCALE GENOMIC DNA]</scope>
</reference>
<keyword id="KW-0997">Cell inner membrane</keyword>
<keyword id="KW-1003">Cell membrane</keyword>
<keyword id="KW-0472">Membrane</keyword>
<evidence type="ECO:0000255" key="1">
    <source>
        <dbReference type="HAMAP-Rule" id="MF_00386"/>
    </source>
</evidence>
<feature type="chain" id="PRO_1000122677" description="Putative membrane protein insertion efficiency factor">
    <location>
        <begin position="1"/>
        <end position="74"/>
    </location>
</feature>
<sequence length="74" mass="8566">MKQIALFLIKCYKFISQFLPSICRFQPSCSTYAYQAIETYGFFKGSLLTFKRIIRCRPFCAGGFDPVPLPKKKI</sequence>
<name>YIDD_ENDTX</name>